<reference key="1">
    <citation type="journal article" date="1997" name="Nature">
        <title>The nucleotide sequence of Saccharomyces cerevisiae chromosome IX.</title>
        <authorList>
            <person name="Churcher C.M."/>
            <person name="Bowman S."/>
            <person name="Badcock K."/>
            <person name="Bankier A.T."/>
            <person name="Brown D."/>
            <person name="Chillingworth T."/>
            <person name="Connor R."/>
            <person name="Devlin K."/>
            <person name="Gentles S."/>
            <person name="Hamlin N."/>
            <person name="Harris D.E."/>
            <person name="Horsnell T."/>
            <person name="Hunt S."/>
            <person name="Jagels K."/>
            <person name="Jones M."/>
            <person name="Lye G."/>
            <person name="Moule S."/>
            <person name="Odell C."/>
            <person name="Pearson D."/>
            <person name="Rajandream M.A."/>
            <person name="Rice P."/>
            <person name="Rowley N."/>
            <person name="Skelton J."/>
            <person name="Smith V."/>
            <person name="Walsh S.V."/>
            <person name="Whitehead S."/>
            <person name="Barrell B.G."/>
        </authorList>
    </citation>
    <scope>NUCLEOTIDE SEQUENCE [LARGE SCALE GENOMIC DNA]</scope>
    <source>
        <strain>ATCC 204508 / S288c</strain>
    </source>
</reference>
<reference key="2">
    <citation type="journal article" date="2014" name="G3 (Bethesda)">
        <title>The reference genome sequence of Saccharomyces cerevisiae: Then and now.</title>
        <authorList>
            <person name="Engel S.R."/>
            <person name="Dietrich F.S."/>
            <person name="Fisk D.G."/>
            <person name="Binkley G."/>
            <person name="Balakrishnan R."/>
            <person name="Costanzo M.C."/>
            <person name="Dwight S.S."/>
            <person name="Hitz B.C."/>
            <person name="Karra K."/>
            <person name="Nash R.S."/>
            <person name="Weng S."/>
            <person name="Wong E.D."/>
            <person name="Lloyd P."/>
            <person name="Skrzypek M.S."/>
            <person name="Miyasato S.R."/>
            <person name="Simison M."/>
            <person name="Cherry J.M."/>
        </authorList>
    </citation>
    <scope>GENOME REANNOTATION</scope>
    <source>
        <strain>ATCC 204508 / S288c</strain>
    </source>
</reference>
<reference key="3">
    <citation type="journal article" date="2007" name="Genome Res.">
        <title>Approaching a complete repository of sequence-verified protein-encoding clones for Saccharomyces cerevisiae.</title>
        <authorList>
            <person name="Hu Y."/>
            <person name="Rolfs A."/>
            <person name="Bhullar B."/>
            <person name="Murthy T.V.S."/>
            <person name="Zhu C."/>
            <person name="Berger M.F."/>
            <person name="Camargo A.A."/>
            <person name="Kelley F."/>
            <person name="McCarron S."/>
            <person name="Jepson D."/>
            <person name="Richardson A."/>
            <person name="Raphael J."/>
            <person name="Moreira D."/>
            <person name="Taycher E."/>
            <person name="Zuo D."/>
            <person name="Mohr S."/>
            <person name="Kane M.F."/>
            <person name="Williamson J."/>
            <person name="Simpson A.J.G."/>
            <person name="Bulyk M.L."/>
            <person name="Harlow E."/>
            <person name="Marsischky G."/>
            <person name="Kolodner R.D."/>
            <person name="LaBaer J."/>
        </authorList>
    </citation>
    <scope>NUCLEOTIDE SEQUENCE [GENOMIC DNA]</scope>
    <source>
        <strain>ATCC 204508 / S288c</strain>
    </source>
</reference>
<accession>P40440</accession>
<gene>
    <name type="ordered locus">YIL171W</name>
    <name type="ORF">YI9402.06A</name>
</gene>
<feature type="chain" id="PRO_0000050407" description="Putative transporter-like protein YIL171W">
    <location>
        <begin position="1"/>
        <end position="109"/>
    </location>
</feature>
<feature type="topological domain" description="Cytoplasmic" evidence="1">
    <location>
        <begin position="1"/>
        <end position="56"/>
    </location>
</feature>
<feature type="transmembrane region" description="Helical" evidence="1">
    <location>
        <begin position="57"/>
        <end position="77"/>
    </location>
</feature>
<feature type="topological domain" description="Extracellular" evidence="1">
    <location>
        <begin position="78"/>
        <end position="109"/>
    </location>
</feature>
<feature type="region of interest" description="Disordered" evidence="2">
    <location>
        <begin position="1"/>
        <end position="40"/>
    </location>
</feature>
<feature type="compositionally biased region" description="Polar residues" evidence="2">
    <location>
        <begin position="1"/>
        <end position="22"/>
    </location>
</feature>
<feature type="compositionally biased region" description="Basic and acidic residues" evidence="2">
    <location>
        <begin position="29"/>
        <end position="39"/>
    </location>
</feature>
<feature type="glycosylation site" description="N-linked (GlcNAc...) asparagine" evidence="1">
    <location>
        <position position="87"/>
    </location>
</feature>
<organism>
    <name type="scientific">Saccharomyces cerevisiae (strain ATCC 204508 / S288c)</name>
    <name type="common">Baker's yeast</name>
    <dbReference type="NCBI Taxonomy" id="559292"/>
    <lineage>
        <taxon>Eukaryota</taxon>
        <taxon>Fungi</taxon>
        <taxon>Dikarya</taxon>
        <taxon>Ascomycota</taxon>
        <taxon>Saccharomycotina</taxon>
        <taxon>Saccharomycetes</taxon>
        <taxon>Saccharomycetales</taxon>
        <taxon>Saccharomycetaceae</taxon>
        <taxon>Saccharomyces</taxon>
    </lineage>
</organism>
<proteinExistence type="uncertain"/>
<sequence length="109" mass="11638">MSGVNNTSANDLSTTESNSNSAVGAPSVKTEHGDSKDSLNLDATEAPIDLPQKPLSAYTTVAILCLMIAFGGFIFGWDTGTISGFVNLSDFIRRFGQKKTTRGLTTYRK</sequence>
<keyword id="KW-1003">Cell membrane</keyword>
<keyword id="KW-0325">Glycoprotein</keyword>
<keyword id="KW-0472">Membrane</keyword>
<keyword id="KW-0677">Repeat</keyword>
<keyword id="KW-0762">Sugar transport</keyword>
<keyword id="KW-0812">Transmembrane</keyword>
<keyword id="KW-1133">Transmembrane helix</keyword>
<keyword id="KW-0813">Transport</keyword>
<protein>
    <recommendedName>
        <fullName>Putative transporter-like protein YIL171W</fullName>
    </recommendedName>
</protein>
<evidence type="ECO:0000255" key="1"/>
<evidence type="ECO:0000256" key="2">
    <source>
        <dbReference type="SAM" id="MobiDB-lite"/>
    </source>
</evidence>
<evidence type="ECO:0000305" key="3"/>
<evidence type="ECO:0000305" key="4">
    <source>
    </source>
</evidence>
<name>YIR1_YEAST</name>
<dbReference type="EMBL" id="Z46921">
    <property type="protein sequence ID" value="CAA87021.1"/>
    <property type="molecule type" value="Genomic_DNA"/>
</dbReference>
<dbReference type="EMBL" id="AY693265">
    <property type="protein sequence ID" value="AAT93284.1"/>
    <property type="molecule type" value="Genomic_DNA"/>
</dbReference>
<dbReference type="PIR" id="S50356">
    <property type="entry name" value="S50356"/>
</dbReference>
<dbReference type="DIP" id="DIP-7951N"/>
<dbReference type="IntAct" id="P40440">
    <property type="interactions" value="1"/>
</dbReference>
<dbReference type="MINT" id="P40440"/>
<dbReference type="AGR" id="SGD:S000001433"/>
<dbReference type="SGD" id="S000001433">
    <property type="gene designation" value="YIL171W"/>
</dbReference>
<dbReference type="GO" id="GO:0005886">
    <property type="term" value="C:plasma membrane"/>
    <property type="evidence" value="ECO:0007669"/>
    <property type="project" value="UniProtKB-SubCell"/>
</dbReference>
<dbReference type="GO" id="GO:0022857">
    <property type="term" value="F:transmembrane transporter activity"/>
    <property type="evidence" value="ECO:0007669"/>
    <property type="project" value="InterPro"/>
</dbReference>
<dbReference type="InterPro" id="IPR005828">
    <property type="entry name" value="MFS_sugar_transport-like"/>
</dbReference>
<dbReference type="Pfam" id="PF00083">
    <property type="entry name" value="Sugar_tr"/>
    <property type="match status" value="1"/>
</dbReference>
<comment type="function">
    <text>Probable glucose transporter.</text>
</comment>
<comment type="subcellular location">
    <subcellularLocation>
        <location evidence="3">Cell membrane</location>
        <topology evidence="3">Single-pass membrane protein</topology>
    </subcellularLocation>
</comment>
<comment type="similarity">
    <text evidence="3">Belongs to the major facilitator superfamily. Sugar transporter (TC 2.A.1.1) family.</text>
</comment>
<comment type="caution">
    <text evidence="4">Could be the product of a pseudogene unlikely to encode a functional protein. YIL171W and YIL170W represent the N- and C-terminal of a putative transporter. Because of that it is not part of the S.cerevisiae S288c complete/reference proteome set.</text>
</comment>